<dbReference type="EC" id="2.7.8.-" evidence="1"/>
<dbReference type="EMBL" id="CP000243">
    <property type="protein sequence ID" value="ABE06927.1"/>
    <property type="molecule type" value="Genomic_DNA"/>
</dbReference>
<dbReference type="RefSeq" id="WP_000214516.1">
    <property type="nucleotide sequence ID" value="NZ_CP064825.1"/>
</dbReference>
<dbReference type="SMR" id="Q1RCI7"/>
<dbReference type="GeneID" id="93775314"/>
<dbReference type="KEGG" id="eci:UTI89_C1447"/>
<dbReference type="HOGENOM" id="CLU_038053_1_0_6"/>
<dbReference type="Proteomes" id="UP000001952">
    <property type="component" value="Chromosome"/>
</dbReference>
<dbReference type="GO" id="GO:0005886">
    <property type="term" value="C:plasma membrane"/>
    <property type="evidence" value="ECO:0007669"/>
    <property type="project" value="UniProtKB-SubCell"/>
</dbReference>
<dbReference type="GO" id="GO:0008808">
    <property type="term" value="F:cardiolipin synthase activity"/>
    <property type="evidence" value="ECO:0007669"/>
    <property type="project" value="InterPro"/>
</dbReference>
<dbReference type="GO" id="GO:0032049">
    <property type="term" value="P:cardiolipin biosynthetic process"/>
    <property type="evidence" value="ECO:0007669"/>
    <property type="project" value="InterPro"/>
</dbReference>
<dbReference type="CDD" id="cd09152">
    <property type="entry name" value="PLDc_EcCLS_like_1"/>
    <property type="match status" value="1"/>
</dbReference>
<dbReference type="CDD" id="cd09158">
    <property type="entry name" value="PLDc_EcCLS_like_2"/>
    <property type="match status" value="1"/>
</dbReference>
<dbReference type="FunFam" id="3.30.870.10:FF:000002">
    <property type="entry name" value="Cardiolipin synthase A"/>
    <property type="match status" value="1"/>
</dbReference>
<dbReference type="FunFam" id="3.30.870.10:FF:000003">
    <property type="entry name" value="Cardiolipin synthase A"/>
    <property type="match status" value="1"/>
</dbReference>
<dbReference type="Gene3D" id="3.30.870.10">
    <property type="entry name" value="Endonuclease Chain A"/>
    <property type="match status" value="2"/>
</dbReference>
<dbReference type="HAMAP" id="MF_00190">
    <property type="entry name" value="Cardiolipin_synth_ClsA"/>
    <property type="match status" value="1"/>
</dbReference>
<dbReference type="InterPro" id="IPR022924">
    <property type="entry name" value="Cardiolipin_synthase"/>
</dbReference>
<dbReference type="InterPro" id="IPR030840">
    <property type="entry name" value="CL_synthase_A"/>
</dbReference>
<dbReference type="InterPro" id="IPR027379">
    <property type="entry name" value="CLS_N"/>
</dbReference>
<dbReference type="InterPro" id="IPR025202">
    <property type="entry name" value="PLD-like_dom"/>
</dbReference>
<dbReference type="InterPro" id="IPR001736">
    <property type="entry name" value="PLipase_D/transphosphatidylase"/>
</dbReference>
<dbReference type="NCBIfam" id="TIGR04265">
    <property type="entry name" value="bac_cardiolipin"/>
    <property type="match status" value="1"/>
</dbReference>
<dbReference type="PANTHER" id="PTHR21248">
    <property type="entry name" value="CARDIOLIPIN SYNTHASE"/>
    <property type="match status" value="1"/>
</dbReference>
<dbReference type="PANTHER" id="PTHR21248:SF22">
    <property type="entry name" value="PHOSPHOLIPASE D"/>
    <property type="match status" value="1"/>
</dbReference>
<dbReference type="Pfam" id="PF13091">
    <property type="entry name" value="PLDc_2"/>
    <property type="match status" value="2"/>
</dbReference>
<dbReference type="Pfam" id="PF13396">
    <property type="entry name" value="PLDc_N"/>
    <property type="match status" value="1"/>
</dbReference>
<dbReference type="SMART" id="SM00155">
    <property type="entry name" value="PLDc"/>
    <property type="match status" value="2"/>
</dbReference>
<dbReference type="SUPFAM" id="SSF56024">
    <property type="entry name" value="Phospholipase D/nuclease"/>
    <property type="match status" value="2"/>
</dbReference>
<dbReference type="PROSITE" id="PS50035">
    <property type="entry name" value="PLD"/>
    <property type="match status" value="2"/>
</dbReference>
<sequence>MTTVYTLVSWLAILGYWLLIAGVTLRILMKRRAVPSAMAWLLIIYILPLVGIIAYLAVGELHLGKRRAERARAMWPSTAKWLNDLKACKHIFAEENSSVAAPLFKLCERRQGIAGVKGNQLQLMTESDDVMQALIRDIQLARHNIEMVFYIWQPGGMADQVAESLMAAARRGIHCRLMLDSAGSVAFFRSPWPELMRNAGIEVVEALKVNLMRVFLRRMDLRQHRKMIMIDNYIAYTGSMNMVDPRYFKQDAGVGQWIDLMARMEGPIATAMGIIYSCDWEIETGKRILPPPPDVNIMPFEQASGHTIHTIASGPGFPEDLIHQALLTAAYSAREYLIMTTPYFVPSDDLLHAICTAAQRGVDVSIILPRKNDSMLVGWASRAFFTELLAAGVKIYQFEGGLLHTKSVLVDGELSLVGTVNLDMRSLWLNFEITLAIDDKGFGADLAAVQDDYISRSRLLDARLWLKRPLWQRVAERLFYFFSPLL</sequence>
<feature type="chain" id="PRO_1000058485" description="Cardiolipin synthase A">
    <location>
        <begin position="1"/>
        <end position="486"/>
    </location>
</feature>
<feature type="transmembrane region" description="Helical" evidence="1">
    <location>
        <begin position="3"/>
        <end position="23"/>
    </location>
</feature>
<feature type="transmembrane region" description="Helical" evidence="1">
    <location>
        <begin position="38"/>
        <end position="58"/>
    </location>
</feature>
<feature type="domain" description="PLD phosphodiesterase 1" evidence="1">
    <location>
        <begin position="219"/>
        <end position="246"/>
    </location>
</feature>
<feature type="domain" description="PLD phosphodiesterase 2" evidence="1">
    <location>
        <begin position="399"/>
        <end position="426"/>
    </location>
</feature>
<feature type="active site" evidence="1">
    <location>
        <position position="224"/>
    </location>
</feature>
<feature type="active site" evidence="1">
    <location>
        <position position="226"/>
    </location>
</feature>
<feature type="active site" evidence="1">
    <location>
        <position position="231"/>
    </location>
</feature>
<feature type="active site" evidence="1">
    <location>
        <position position="404"/>
    </location>
</feature>
<feature type="active site" evidence="1">
    <location>
        <position position="406"/>
    </location>
</feature>
<feature type="active site" evidence="1">
    <location>
        <position position="411"/>
    </location>
</feature>
<comment type="function">
    <text evidence="1">Catalyzes the reversible phosphatidyl group transfer from one phosphatidylglycerol molecule to another to form cardiolipin (CL) (diphosphatidylglycerol) and glycerol.</text>
</comment>
<comment type="catalytic activity">
    <reaction evidence="1">
        <text>2 a 1,2-diacyl-sn-glycero-3-phospho-(1'-sn-glycerol) = a cardiolipin + glycerol</text>
        <dbReference type="Rhea" id="RHEA:31451"/>
        <dbReference type="ChEBI" id="CHEBI:17754"/>
        <dbReference type="ChEBI" id="CHEBI:62237"/>
        <dbReference type="ChEBI" id="CHEBI:64716"/>
    </reaction>
</comment>
<comment type="subcellular location">
    <subcellularLocation>
        <location evidence="1">Cell inner membrane</location>
        <topology evidence="1">Multi-pass membrane protein</topology>
    </subcellularLocation>
</comment>
<comment type="similarity">
    <text evidence="1">Belongs to the phospholipase D family. Cardiolipin synthase subfamily. ClsA sub-subfamily.</text>
</comment>
<gene>
    <name evidence="1" type="primary">clsA</name>
    <name type="synonym">cls</name>
    <name type="ordered locus">UTI89_C1447</name>
</gene>
<protein>
    <recommendedName>
        <fullName evidence="1">Cardiolipin synthase A</fullName>
        <shortName evidence="1">CL synthase</shortName>
        <ecNumber evidence="1">2.7.8.-</ecNumber>
    </recommendedName>
</protein>
<accession>Q1RCI7</accession>
<name>CLSA_ECOUT</name>
<proteinExistence type="inferred from homology"/>
<reference key="1">
    <citation type="journal article" date="2006" name="Proc. Natl. Acad. Sci. U.S.A.">
        <title>Identification of genes subject to positive selection in uropathogenic strains of Escherichia coli: a comparative genomics approach.</title>
        <authorList>
            <person name="Chen S.L."/>
            <person name="Hung C.-S."/>
            <person name="Xu J."/>
            <person name="Reigstad C.S."/>
            <person name="Magrini V."/>
            <person name="Sabo A."/>
            <person name="Blasiar D."/>
            <person name="Bieri T."/>
            <person name="Meyer R.R."/>
            <person name="Ozersky P."/>
            <person name="Armstrong J.R."/>
            <person name="Fulton R.S."/>
            <person name="Latreille J.P."/>
            <person name="Spieth J."/>
            <person name="Hooton T.M."/>
            <person name="Mardis E.R."/>
            <person name="Hultgren S.J."/>
            <person name="Gordon J.I."/>
        </authorList>
    </citation>
    <scope>NUCLEOTIDE SEQUENCE [LARGE SCALE GENOMIC DNA]</scope>
    <source>
        <strain>UTI89 / UPEC</strain>
    </source>
</reference>
<evidence type="ECO:0000255" key="1">
    <source>
        <dbReference type="HAMAP-Rule" id="MF_00190"/>
    </source>
</evidence>
<keyword id="KW-0997">Cell inner membrane</keyword>
<keyword id="KW-1003">Cell membrane</keyword>
<keyword id="KW-0444">Lipid biosynthesis</keyword>
<keyword id="KW-0443">Lipid metabolism</keyword>
<keyword id="KW-0472">Membrane</keyword>
<keyword id="KW-0594">Phospholipid biosynthesis</keyword>
<keyword id="KW-1208">Phospholipid metabolism</keyword>
<keyword id="KW-0677">Repeat</keyword>
<keyword id="KW-0808">Transferase</keyword>
<keyword id="KW-0812">Transmembrane</keyword>
<keyword id="KW-1133">Transmembrane helix</keyword>
<organism>
    <name type="scientific">Escherichia coli (strain UTI89 / UPEC)</name>
    <dbReference type="NCBI Taxonomy" id="364106"/>
    <lineage>
        <taxon>Bacteria</taxon>
        <taxon>Pseudomonadati</taxon>
        <taxon>Pseudomonadota</taxon>
        <taxon>Gammaproteobacteria</taxon>
        <taxon>Enterobacterales</taxon>
        <taxon>Enterobacteriaceae</taxon>
        <taxon>Escherichia</taxon>
    </lineage>
</organism>